<evidence type="ECO:0000305" key="1"/>
<comment type="function">
    <text>This protein is thought to be a membrane-associated barrier of drug uptake.</text>
</comment>
<comment type="subcellular location">
    <subcellularLocation>
        <location evidence="1">Cell membrane</location>
    </subcellularLocation>
</comment>
<protein>
    <recommendedName>
        <fullName>Chloramphenicol resistance protein</fullName>
    </recommendedName>
</protein>
<gene>
    <name type="primary">cml</name>
</gene>
<organism>
    <name type="scientific">Escherichia coli</name>
    <dbReference type="NCBI Taxonomy" id="562"/>
    <lineage>
        <taxon>Bacteria</taxon>
        <taxon>Pseudomonadati</taxon>
        <taxon>Pseudomonadota</taxon>
        <taxon>Gammaproteobacteria</taxon>
        <taxon>Enterobacterales</taxon>
        <taxon>Enterobacteriaceae</taxon>
        <taxon>Escherichia</taxon>
    </lineage>
</organism>
<proteinExistence type="predicted"/>
<accession>P12056</accession>
<name>CML_ECOLX</name>
<reference key="1">
    <citation type="journal article" date="1986" name="Gene">
        <title>Nucleotide sequence of the R26 chloramphenicol resistance determinant and identification of its gene product.</title>
        <authorList>
            <person name="Dorman C.J."/>
            <person name="Foster T.J."/>
            <person name="Shaw W.V."/>
        </authorList>
    </citation>
    <scope>NUCLEOTIDE SEQUENCE [GENOMIC DNA]</scope>
</reference>
<feature type="chain" id="PRO_0000068564" description="Chloramphenicol resistance protein">
    <location>
        <begin position="1"/>
        <end position="302"/>
    </location>
</feature>
<keyword id="KW-0046">Antibiotic resistance</keyword>
<keyword id="KW-1003">Cell membrane</keyword>
<keyword id="KW-0472">Membrane</keyword>
<keyword id="KW-0614">Plasmid</keyword>
<sequence length="302" mass="33390">MSFTAYSDPCWPWSRGRPIARSARRHVAWVAGYLCVSRFGHDRCICRRGSFWPETRVQRVAGLQWSQLLLPVKCLNFWLYTLCYAAGMGSFFVFFSIAPGLMMGRPRCVSAWLQPAVRHSAIAMVFTARFMGSVIPKWGSPSVLRMGMGCLIAGAVLLAITEIWALHRVRLYCSNVASGIGVATAVSVPMALFEDSTMLLERSRQSTSAWACTARKHRNVDHFAVAAQRLGPCRVTVWTLATVVLGLSCVSRVKGSRGQGEHDAGRATNVGKYIKSQSLRECGKLSPNKCCSRPKTYAFRLG</sequence>
<dbReference type="EMBL" id="M22614">
    <property type="protein sequence ID" value="AAA26079.1"/>
    <property type="molecule type" value="Genomic_DNA"/>
</dbReference>
<dbReference type="PIR" id="A25854">
    <property type="entry name" value="A25854"/>
</dbReference>
<dbReference type="KEGG" id="ag:AAA26079"/>
<dbReference type="GO" id="GO:0005886">
    <property type="term" value="C:plasma membrane"/>
    <property type="evidence" value="ECO:0007669"/>
    <property type="project" value="UniProtKB-SubCell"/>
</dbReference>
<dbReference type="GO" id="GO:0046677">
    <property type="term" value="P:response to antibiotic"/>
    <property type="evidence" value="ECO:0007669"/>
    <property type="project" value="UniProtKB-KW"/>
</dbReference>
<dbReference type="Gene3D" id="1.20.1720.10">
    <property type="entry name" value="Multidrug resistance protein D"/>
    <property type="match status" value="1"/>
</dbReference>
<dbReference type="InterPro" id="IPR036259">
    <property type="entry name" value="MFS_trans_sf"/>
</dbReference>
<dbReference type="SUPFAM" id="SSF103473">
    <property type="entry name" value="MFS general substrate transporter"/>
    <property type="match status" value="1"/>
</dbReference>
<geneLocation type="plasmid">
    <name>R26</name>
</geneLocation>